<accession>A2T712</accession>
<reference key="1">
    <citation type="submission" date="2006-08" db="EMBL/GenBank/DDBJ databases">
        <title>Positive selection in transcription factor genes on the human lineage.</title>
        <authorList>
            <person name="Nickel G.C."/>
            <person name="Tefft D.L."/>
            <person name="Trevarthen K."/>
            <person name="Funt J."/>
            <person name="Adams M.D."/>
        </authorList>
    </citation>
    <scope>NUCLEOTIDE SEQUENCE [GENOMIC DNA]</scope>
</reference>
<sequence length="473" mass="53675">MMTKVLGMAPVLGPRPPQEQVGPLMVKVEEKEEKGKYLPSLEMFRQRFRQFGYHDTPGPREALSQLRVLCCEWLRPEIHTKEQILELLVLEQFLTILPQELQAWVQEHCPESAEEAVTLLEDLERELDEPGHQVSTPPNEQKPVWEKISSSGTAKESPSSMQPQPLETCHKYESWGPLYIQESGEEQEFAQDPRKVRDCRLSTQHEESADEQKGSEAEGLKGDIISVIIANKPEASLERQCVNLENEKGTKPPLQEAGSKKGRESVPTKPTPGERRYICAECGKAFSNSSNLTKHRRTHTGEKPYVCTKCGKAFSHSSNLTLHYRTHLVDRPYDCKCGKAFGQSSDLLKHQRMHTEEAPYQCKDCGKAFSGKGSLIRHYRIHTGEKPYQCNECGKSFSQHAGLSSHQRLHTGEKPYKCKECGKAFNHSSNFNKHHRIHTGEKPYWCHHCGKTFCSKSNLSKHQRVHTGEGEAP</sequence>
<name>ZSC21_PANTR</name>
<dbReference type="EMBL" id="DQ977351">
    <property type="protein sequence ID" value="ABM91967.1"/>
    <property type="molecule type" value="Genomic_DNA"/>
</dbReference>
<dbReference type="RefSeq" id="NP_001129089.1">
    <property type="nucleotide sequence ID" value="NM_001135617.1"/>
</dbReference>
<dbReference type="RefSeq" id="XP_009451515.1">
    <property type="nucleotide sequence ID" value="XM_009453240.3"/>
</dbReference>
<dbReference type="RefSeq" id="XP_009451517.1">
    <property type="nucleotide sequence ID" value="XM_009453242.1"/>
</dbReference>
<dbReference type="RefSeq" id="XP_009451518.1">
    <property type="nucleotide sequence ID" value="XM_009453243.2"/>
</dbReference>
<dbReference type="RefSeq" id="XP_054543066.1">
    <property type="nucleotide sequence ID" value="XM_054687091.2"/>
</dbReference>
<dbReference type="RefSeq" id="XP_054543067.1">
    <property type="nucleotide sequence ID" value="XM_054687092.2"/>
</dbReference>
<dbReference type="RefSeq" id="XP_054543068.1">
    <property type="nucleotide sequence ID" value="XM_054687093.2"/>
</dbReference>
<dbReference type="RefSeq" id="XP_054543069.1">
    <property type="nucleotide sequence ID" value="XM_054687094.2"/>
</dbReference>
<dbReference type="RefSeq" id="XP_063669871.1">
    <property type="nucleotide sequence ID" value="XM_063813801.1"/>
</dbReference>
<dbReference type="SMR" id="A2T712"/>
<dbReference type="FunCoup" id="A2T712">
    <property type="interactions" value="924"/>
</dbReference>
<dbReference type="STRING" id="9598.ENSPTRP00000054464"/>
<dbReference type="PaxDb" id="9598-ENSPTRP00000054464"/>
<dbReference type="Ensembl" id="ENSPTRT00000061919.3">
    <property type="protein sequence ID" value="ENSPTRP00000054464.2"/>
    <property type="gene ID" value="ENSPTRG00000019469.7"/>
</dbReference>
<dbReference type="GeneID" id="463584"/>
<dbReference type="KEGG" id="ptr:463584"/>
<dbReference type="CTD" id="7589"/>
<dbReference type="VGNC" id="VGNC:4591">
    <property type="gene designation" value="ZSCAN21"/>
</dbReference>
<dbReference type="eggNOG" id="KOG1721">
    <property type="taxonomic scope" value="Eukaryota"/>
</dbReference>
<dbReference type="GeneTree" id="ENSGT00940000161607"/>
<dbReference type="HOGENOM" id="CLU_002678_49_8_1"/>
<dbReference type="InParanoid" id="A2T712"/>
<dbReference type="OMA" id="WEPLYIQ"/>
<dbReference type="OrthoDB" id="2401at9604"/>
<dbReference type="TreeFam" id="TF338304"/>
<dbReference type="Proteomes" id="UP000002277">
    <property type="component" value="Chromosome 7"/>
</dbReference>
<dbReference type="Bgee" id="ENSPTRG00000019469">
    <property type="expression patterns" value="Expressed in testis and 21 other cell types or tissues"/>
</dbReference>
<dbReference type="GO" id="GO:0005634">
    <property type="term" value="C:nucleus"/>
    <property type="evidence" value="ECO:0007669"/>
    <property type="project" value="UniProtKB-SubCell"/>
</dbReference>
<dbReference type="GO" id="GO:0001228">
    <property type="term" value="F:DNA-binding transcription activator activity, RNA polymerase II-specific"/>
    <property type="evidence" value="ECO:0007669"/>
    <property type="project" value="Ensembl"/>
</dbReference>
<dbReference type="GO" id="GO:0000981">
    <property type="term" value="F:DNA-binding transcription factor activity, RNA polymerase II-specific"/>
    <property type="evidence" value="ECO:0000318"/>
    <property type="project" value="GO_Central"/>
</dbReference>
<dbReference type="GO" id="GO:0000978">
    <property type="term" value="F:RNA polymerase II cis-regulatory region sequence-specific DNA binding"/>
    <property type="evidence" value="ECO:0000318"/>
    <property type="project" value="GO_Central"/>
</dbReference>
<dbReference type="GO" id="GO:0008270">
    <property type="term" value="F:zinc ion binding"/>
    <property type="evidence" value="ECO:0007669"/>
    <property type="project" value="UniProtKB-KW"/>
</dbReference>
<dbReference type="GO" id="GO:0030154">
    <property type="term" value="P:cell differentiation"/>
    <property type="evidence" value="ECO:0007669"/>
    <property type="project" value="UniProtKB-KW"/>
</dbReference>
<dbReference type="GO" id="GO:0007141">
    <property type="term" value="P:male meiosis I"/>
    <property type="evidence" value="ECO:0000250"/>
    <property type="project" value="UniProtKB"/>
</dbReference>
<dbReference type="GO" id="GO:0006357">
    <property type="term" value="P:regulation of transcription by RNA polymerase II"/>
    <property type="evidence" value="ECO:0000318"/>
    <property type="project" value="GO_Central"/>
</dbReference>
<dbReference type="GO" id="GO:0007283">
    <property type="term" value="P:spermatogenesis"/>
    <property type="evidence" value="ECO:0000250"/>
    <property type="project" value="UniProtKB"/>
</dbReference>
<dbReference type="CDD" id="cd07936">
    <property type="entry name" value="SCAN"/>
    <property type="match status" value="1"/>
</dbReference>
<dbReference type="FunFam" id="3.30.160.60:FF:000172">
    <property type="entry name" value="Zinc finger and SCAN domain containing 21"/>
    <property type="match status" value="2"/>
</dbReference>
<dbReference type="FunFam" id="3.30.160.60:FF:000151">
    <property type="entry name" value="Zinc finger and SCAN domain-containing 21"/>
    <property type="match status" value="1"/>
</dbReference>
<dbReference type="FunFam" id="3.30.160.60:FF:000467">
    <property type="entry name" value="Zinc finger and SCAN domain-containing 21"/>
    <property type="match status" value="1"/>
</dbReference>
<dbReference type="FunFam" id="3.30.160.60:FF:000955">
    <property type="entry name" value="Zinc finger and SCAN domain-containing protein 21"/>
    <property type="match status" value="1"/>
</dbReference>
<dbReference type="FunFam" id="3.30.160.60:FF:001047">
    <property type="entry name" value="Zinc finger and SCAN domain-containing protein 21"/>
    <property type="match status" value="1"/>
</dbReference>
<dbReference type="FunFam" id="1.10.4020.10:FF:000001">
    <property type="entry name" value="zinc finger protein 263 isoform X1"/>
    <property type="match status" value="1"/>
</dbReference>
<dbReference type="FunFam" id="3.30.160.60:FF:002343">
    <property type="entry name" value="Zinc finger protein 33A"/>
    <property type="match status" value="1"/>
</dbReference>
<dbReference type="Gene3D" id="3.30.160.60">
    <property type="entry name" value="Classic Zinc Finger"/>
    <property type="match status" value="7"/>
</dbReference>
<dbReference type="Gene3D" id="1.10.4020.10">
    <property type="entry name" value="DNA breaking-rejoining enzymes"/>
    <property type="match status" value="1"/>
</dbReference>
<dbReference type="InterPro" id="IPR003309">
    <property type="entry name" value="SCAN_dom"/>
</dbReference>
<dbReference type="InterPro" id="IPR038269">
    <property type="entry name" value="SCAN_sf"/>
</dbReference>
<dbReference type="InterPro" id="IPR036236">
    <property type="entry name" value="Znf_C2H2_sf"/>
</dbReference>
<dbReference type="InterPro" id="IPR013087">
    <property type="entry name" value="Znf_C2H2_type"/>
</dbReference>
<dbReference type="PANTHER" id="PTHR23226">
    <property type="entry name" value="ZINC FINGER AND SCAN DOMAIN-CONTAINING"/>
    <property type="match status" value="1"/>
</dbReference>
<dbReference type="PANTHER" id="PTHR23226:SF366">
    <property type="entry name" value="ZINC FINGER PROTEIN ZFP2"/>
    <property type="match status" value="1"/>
</dbReference>
<dbReference type="Pfam" id="PF02023">
    <property type="entry name" value="SCAN"/>
    <property type="match status" value="1"/>
</dbReference>
<dbReference type="Pfam" id="PF00096">
    <property type="entry name" value="zf-C2H2"/>
    <property type="match status" value="5"/>
</dbReference>
<dbReference type="Pfam" id="PF13465">
    <property type="entry name" value="zf-H2C2_2"/>
    <property type="match status" value="1"/>
</dbReference>
<dbReference type="SMART" id="SM00431">
    <property type="entry name" value="SCAN"/>
    <property type="match status" value="1"/>
</dbReference>
<dbReference type="SMART" id="SM00355">
    <property type="entry name" value="ZnF_C2H2"/>
    <property type="match status" value="7"/>
</dbReference>
<dbReference type="SUPFAM" id="SSF57667">
    <property type="entry name" value="beta-beta-alpha zinc fingers"/>
    <property type="match status" value="4"/>
</dbReference>
<dbReference type="SUPFAM" id="SSF47353">
    <property type="entry name" value="Retrovirus capsid dimerization domain-like"/>
    <property type="match status" value="1"/>
</dbReference>
<dbReference type="PROSITE" id="PS50804">
    <property type="entry name" value="SCAN_BOX"/>
    <property type="match status" value="1"/>
</dbReference>
<dbReference type="PROSITE" id="PS00028">
    <property type="entry name" value="ZINC_FINGER_C2H2_1"/>
    <property type="match status" value="6"/>
</dbReference>
<dbReference type="PROSITE" id="PS50157">
    <property type="entry name" value="ZINC_FINGER_C2H2_2"/>
    <property type="match status" value="7"/>
</dbReference>
<gene>
    <name type="primary">ZSCAN21</name>
</gene>
<proteinExistence type="inferred from homology"/>
<feature type="chain" id="PRO_0000285489" description="Zinc finger and SCAN domain-containing protein 21">
    <location>
        <begin position="1"/>
        <end position="473"/>
    </location>
</feature>
<feature type="domain" description="SCAN box" evidence="4">
    <location>
        <begin position="45"/>
        <end position="127"/>
    </location>
</feature>
<feature type="zinc finger region" description="C2H2-type 1" evidence="3">
    <location>
        <begin position="277"/>
        <end position="299"/>
    </location>
</feature>
<feature type="zinc finger region" description="C2H2-type 2" evidence="3">
    <location>
        <begin position="305"/>
        <end position="327"/>
    </location>
</feature>
<feature type="zinc finger region" description="C2H2-type 3" evidence="3">
    <location>
        <begin position="333"/>
        <end position="354"/>
    </location>
</feature>
<feature type="zinc finger region" description="C2H2-type 4" evidence="3">
    <location>
        <begin position="360"/>
        <end position="382"/>
    </location>
</feature>
<feature type="zinc finger region" description="C2H2-type 5" evidence="3">
    <location>
        <begin position="388"/>
        <end position="410"/>
    </location>
</feature>
<feature type="zinc finger region" description="C2H2-type 6" evidence="3">
    <location>
        <begin position="416"/>
        <end position="438"/>
    </location>
</feature>
<feature type="zinc finger region" description="C2H2-type 7" evidence="3">
    <location>
        <begin position="444"/>
        <end position="466"/>
    </location>
</feature>
<feature type="region of interest" description="Disordered" evidence="5">
    <location>
        <begin position="127"/>
        <end position="167"/>
    </location>
</feature>
<feature type="region of interest" description="Disordered" evidence="5">
    <location>
        <begin position="244"/>
        <end position="272"/>
    </location>
</feature>
<feature type="compositionally biased region" description="Polar residues" evidence="5">
    <location>
        <begin position="148"/>
        <end position="165"/>
    </location>
</feature>
<feature type="compositionally biased region" description="Basic and acidic residues" evidence="5">
    <location>
        <begin position="258"/>
        <end position="272"/>
    </location>
</feature>
<feature type="cross-link" description="Glycyl lysine isopeptide (Lys-Gly) (interchain with G-Cter in SUMO2)" evidence="2">
    <location>
        <position position="27"/>
    </location>
</feature>
<feature type="cross-link" description="Glycyl lysine isopeptide (Lys-Gly) (interchain with G-Cter in SUMO2)" evidence="2">
    <location>
        <position position="221"/>
    </location>
</feature>
<feature type="cross-link" description="Glycyl lysine isopeptide (Lys-Gly) (interchain with G-Cter in SUMO2)" evidence="2">
    <location>
        <position position="232"/>
    </location>
</feature>
<feature type="cross-link" description="Glycyl lysine isopeptide (Lys-Gly) (interchain with G-Cter in SUMO2)" evidence="2">
    <location>
        <position position="349"/>
    </location>
</feature>
<keyword id="KW-0010">Activator</keyword>
<keyword id="KW-0221">Differentiation</keyword>
<keyword id="KW-0238">DNA-binding</keyword>
<keyword id="KW-1017">Isopeptide bond</keyword>
<keyword id="KW-0469">Meiosis</keyword>
<keyword id="KW-0479">Metal-binding</keyword>
<keyword id="KW-0539">Nucleus</keyword>
<keyword id="KW-1185">Reference proteome</keyword>
<keyword id="KW-0677">Repeat</keyword>
<keyword id="KW-0744">Spermatogenesis</keyword>
<keyword id="KW-0804">Transcription</keyword>
<keyword id="KW-0805">Transcription regulation</keyword>
<keyword id="KW-0832">Ubl conjugation</keyword>
<keyword id="KW-0862">Zinc</keyword>
<keyword id="KW-0863">Zinc-finger</keyword>
<comment type="function">
    <text evidence="1">Strong transcriptional activator (By similarity). Plays an important role in spermatogenesis; essential for the progression of meiotic prophase I in spermatocytes (By similarity).</text>
</comment>
<comment type="subcellular location">
    <subcellularLocation>
        <location evidence="4">Nucleus</location>
    </subcellularLocation>
</comment>
<comment type="similarity">
    <text evidence="6">Belongs to the krueppel C2H2-type zinc-finger protein family.</text>
</comment>
<organism>
    <name type="scientific">Pan troglodytes</name>
    <name type="common">Chimpanzee</name>
    <dbReference type="NCBI Taxonomy" id="9598"/>
    <lineage>
        <taxon>Eukaryota</taxon>
        <taxon>Metazoa</taxon>
        <taxon>Chordata</taxon>
        <taxon>Craniata</taxon>
        <taxon>Vertebrata</taxon>
        <taxon>Euteleostomi</taxon>
        <taxon>Mammalia</taxon>
        <taxon>Eutheria</taxon>
        <taxon>Euarchontoglires</taxon>
        <taxon>Primates</taxon>
        <taxon>Haplorrhini</taxon>
        <taxon>Catarrhini</taxon>
        <taxon>Hominidae</taxon>
        <taxon>Pan</taxon>
    </lineage>
</organism>
<protein>
    <recommendedName>
        <fullName>Zinc finger and SCAN domain-containing protein 21</fullName>
    </recommendedName>
</protein>
<evidence type="ECO:0000250" key="1">
    <source>
        <dbReference type="UniProtKB" id="Q07231"/>
    </source>
</evidence>
<evidence type="ECO:0000250" key="2">
    <source>
        <dbReference type="UniProtKB" id="Q9Y5A6"/>
    </source>
</evidence>
<evidence type="ECO:0000255" key="3">
    <source>
        <dbReference type="PROSITE-ProRule" id="PRU00042"/>
    </source>
</evidence>
<evidence type="ECO:0000255" key="4">
    <source>
        <dbReference type="PROSITE-ProRule" id="PRU00187"/>
    </source>
</evidence>
<evidence type="ECO:0000256" key="5">
    <source>
        <dbReference type="SAM" id="MobiDB-lite"/>
    </source>
</evidence>
<evidence type="ECO:0000305" key="6"/>